<comment type="function">
    <text evidence="1">Binds and compact DNA (95 to 150 base pairs) to form nucleosome-like structures that contain positive DNA supercoils. Increases the resistance of DNA to thermal denaturation (By similarity).</text>
</comment>
<comment type="subunit">
    <text evidence="1 2">Homodimer (PubMed:12527306). Dimers then assemble into higher oligomers, with the DNA wrapped around the protein core (By similarity).</text>
</comment>
<comment type="subcellular location">
    <subcellularLocation>
        <location evidence="3">Cytoplasm</location>
    </subcellularLocation>
    <subcellularLocation>
        <location evidence="3">Chromosome</location>
    </subcellularLocation>
</comment>
<comment type="similarity">
    <text evidence="3">Belongs to the archaeal histone HMF family.</text>
</comment>
<comment type="sequence caution" evidence="3">
    <conflict type="erroneous initiation">
        <sequence resource="EMBL-CDS" id="BAA30901"/>
    </conflict>
</comment>
<dbReference type="EMBL" id="BA000001">
    <property type="protein sequence ID" value="BAA30901.1"/>
    <property type="status" value="ALT_INIT"/>
    <property type="molecule type" value="Genomic_DNA"/>
</dbReference>
<dbReference type="PIR" id="F71188">
    <property type="entry name" value="F71188"/>
</dbReference>
<dbReference type="RefSeq" id="WP_048053612.1">
    <property type="nucleotide sequence ID" value="NC_000961.1"/>
</dbReference>
<dbReference type="PDB" id="1KU5">
    <property type="method" value="X-ray"/>
    <property type="resolution" value="2.30 A"/>
    <property type="chains" value="A/B=1-67"/>
</dbReference>
<dbReference type="PDBsum" id="1KU5"/>
<dbReference type="SMR" id="O74098"/>
<dbReference type="STRING" id="70601.gene:9378784"/>
<dbReference type="EnsemblBacteria" id="BAA30901">
    <property type="protein sequence ID" value="BAA30901"/>
    <property type="gene ID" value="BAA30901"/>
</dbReference>
<dbReference type="GeneID" id="1442629"/>
<dbReference type="KEGG" id="pho:PHS051"/>
<dbReference type="eggNOG" id="arCOG02144">
    <property type="taxonomic scope" value="Archaea"/>
</dbReference>
<dbReference type="EvolutionaryTrace" id="O74098"/>
<dbReference type="Proteomes" id="UP000000752">
    <property type="component" value="Chromosome"/>
</dbReference>
<dbReference type="GO" id="GO:0005694">
    <property type="term" value="C:chromosome"/>
    <property type="evidence" value="ECO:0007669"/>
    <property type="project" value="UniProtKB-SubCell"/>
</dbReference>
<dbReference type="GO" id="GO:0005737">
    <property type="term" value="C:cytoplasm"/>
    <property type="evidence" value="ECO:0007669"/>
    <property type="project" value="UniProtKB-SubCell"/>
</dbReference>
<dbReference type="GO" id="GO:0003677">
    <property type="term" value="F:DNA binding"/>
    <property type="evidence" value="ECO:0007669"/>
    <property type="project" value="UniProtKB-KW"/>
</dbReference>
<dbReference type="GO" id="GO:0046982">
    <property type="term" value="F:protein heterodimerization activity"/>
    <property type="evidence" value="ECO:0007669"/>
    <property type="project" value="InterPro"/>
</dbReference>
<dbReference type="CDD" id="cd22909">
    <property type="entry name" value="HFD_archaea_histone-like"/>
    <property type="match status" value="1"/>
</dbReference>
<dbReference type="Gene3D" id="1.10.20.10">
    <property type="entry name" value="Histone, subunit A"/>
    <property type="match status" value="1"/>
</dbReference>
<dbReference type="InterPro" id="IPR050947">
    <property type="entry name" value="Archaeal_histone_HMF"/>
</dbReference>
<dbReference type="InterPro" id="IPR003958">
    <property type="entry name" value="CBFA_NFYB_domain"/>
</dbReference>
<dbReference type="InterPro" id="IPR009072">
    <property type="entry name" value="Histone-fold"/>
</dbReference>
<dbReference type="InterPro" id="IPR050004">
    <property type="entry name" value="HmfB-like"/>
</dbReference>
<dbReference type="NCBIfam" id="NF043032">
    <property type="entry name" value="archaea_histone"/>
    <property type="match status" value="1"/>
</dbReference>
<dbReference type="PANTHER" id="PTHR47828">
    <property type="entry name" value="ARCHAEAL HISTONE A"/>
    <property type="match status" value="1"/>
</dbReference>
<dbReference type="PANTHER" id="PTHR47828:SF1">
    <property type="entry name" value="ARCHAEAL HISTONE A"/>
    <property type="match status" value="1"/>
</dbReference>
<dbReference type="Pfam" id="PF00808">
    <property type="entry name" value="CBFD_NFYB_HMF"/>
    <property type="match status" value="1"/>
</dbReference>
<dbReference type="SUPFAM" id="SSF47113">
    <property type="entry name" value="Histone-fold"/>
    <property type="match status" value="1"/>
</dbReference>
<protein>
    <recommendedName>
        <fullName>Archaeal histone A</fullName>
    </recommendedName>
    <alternativeName>
        <fullName>Archaeal histone A1</fullName>
    </alternativeName>
</protein>
<feature type="chain" id="PRO_0000154996" description="Archaeal histone A">
    <location>
        <begin position="1"/>
        <end position="67"/>
    </location>
</feature>
<feature type="region of interest" description="Interaction with DNA" evidence="1">
    <location>
        <begin position="20"/>
        <end position="22"/>
    </location>
</feature>
<feature type="region of interest" description="Interaction with DNA" evidence="1">
    <location>
        <begin position="54"/>
        <end position="57"/>
    </location>
</feature>
<feature type="helix" evidence="5">
    <location>
        <begin position="6"/>
        <end position="15"/>
    </location>
</feature>
<feature type="strand" evidence="5">
    <location>
        <begin position="19"/>
        <end position="21"/>
    </location>
</feature>
<feature type="helix" evidence="5">
    <location>
        <begin position="23"/>
        <end position="49"/>
    </location>
</feature>
<feature type="turn" evidence="5">
    <location>
        <begin position="50"/>
        <end position="52"/>
    </location>
</feature>
<feature type="strand" evidence="5">
    <location>
        <begin position="54"/>
        <end position="56"/>
    </location>
</feature>
<feature type="helix" evidence="5">
    <location>
        <begin position="58"/>
        <end position="65"/>
    </location>
</feature>
<proteinExistence type="evidence at protein level"/>
<reference key="1">
    <citation type="journal article" date="1998" name="DNA Res.">
        <title>Complete sequence and gene organization of the genome of a hyper-thermophilic archaebacterium, Pyrococcus horikoshii OT3.</title>
        <authorList>
            <person name="Kawarabayasi Y."/>
            <person name="Sawada M."/>
            <person name="Horikawa H."/>
            <person name="Haikawa Y."/>
            <person name="Hino Y."/>
            <person name="Yamamoto S."/>
            <person name="Sekine M."/>
            <person name="Baba S."/>
            <person name="Kosugi H."/>
            <person name="Hosoyama A."/>
            <person name="Nagai Y."/>
            <person name="Sakai M."/>
            <person name="Ogura K."/>
            <person name="Otsuka R."/>
            <person name="Nakazawa H."/>
            <person name="Takamiya M."/>
            <person name="Ohfuku Y."/>
            <person name="Funahashi T."/>
            <person name="Tanaka T."/>
            <person name="Kudoh Y."/>
            <person name="Yamazaki J."/>
            <person name="Kushida N."/>
            <person name="Oguchi A."/>
            <person name="Aoki K."/>
            <person name="Yoshizawa T."/>
            <person name="Nakamura Y."/>
            <person name="Robb F.T."/>
            <person name="Horikoshi K."/>
            <person name="Masuchi Y."/>
            <person name="Shizuya H."/>
            <person name="Kikuchi H."/>
        </authorList>
    </citation>
    <scope>NUCLEOTIDE SEQUENCE [LARGE SCALE GENOMIC DNA]</scope>
    <source>
        <strain>ATCC 700860 / DSM 12428 / JCM 9974 / NBRC 100139 / OT-3</strain>
    </source>
</reference>
<reference evidence="4" key="2">
    <citation type="journal article" date="2003" name="J. Mol. Biol.">
        <title>Structure based hyperthermostability of archaeal histone HPhA from Pyrococcus horikoshii.</title>
        <authorList>
            <person name="Li T."/>
            <person name="Sun F."/>
            <person name="Ji X."/>
            <person name="Feng Y."/>
            <person name="Rao Z."/>
        </authorList>
    </citation>
    <scope>X-RAY CRYSTALLOGRAPHY (2.30 ANGSTROMS)</scope>
    <scope>SUBUNIT</scope>
</reference>
<organism>
    <name type="scientific">Pyrococcus horikoshii (strain ATCC 700860 / DSM 12428 / JCM 9974 / NBRC 100139 / OT-3)</name>
    <dbReference type="NCBI Taxonomy" id="70601"/>
    <lineage>
        <taxon>Archaea</taxon>
        <taxon>Methanobacteriati</taxon>
        <taxon>Methanobacteriota</taxon>
        <taxon>Thermococci</taxon>
        <taxon>Thermococcales</taxon>
        <taxon>Thermococcaceae</taxon>
        <taxon>Pyrococcus</taxon>
    </lineage>
</organism>
<gene>
    <name type="ordered locus">PH1782.1</name>
    <name type="ORF">PHS051</name>
</gene>
<accession>O74098</accession>
<name>HARA_PYRHO</name>
<evidence type="ECO:0000250" key="1">
    <source>
        <dbReference type="UniProtKB" id="P19267"/>
    </source>
</evidence>
<evidence type="ECO:0000269" key="2">
    <source>
    </source>
</evidence>
<evidence type="ECO:0000305" key="3"/>
<evidence type="ECO:0007744" key="4">
    <source>
        <dbReference type="PDB" id="1KU5"/>
    </source>
</evidence>
<evidence type="ECO:0007829" key="5">
    <source>
        <dbReference type="PDB" id="1KU5"/>
    </source>
</evidence>
<sequence>MGELPIAPVDRLIRKAGAERVSEQAAKVLAEYLEEYAIEIAKKAVEFARHAGRKTVKVEDIKLAIKS</sequence>
<keyword id="KW-0002">3D-structure</keyword>
<keyword id="KW-0158">Chromosome</keyword>
<keyword id="KW-0963">Cytoplasm</keyword>
<keyword id="KW-0238">DNA-binding</keyword>